<evidence type="ECO:0000255" key="1">
    <source>
        <dbReference type="HAMAP-Rule" id="MF_00270"/>
    </source>
</evidence>
<evidence type="ECO:0000305" key="2"/>
<sequence length="85" mass="10066">MAFKKKFTPKKKFCRFCANKNLPVDYKRPDILKDFITDRGKIIARRITGTCAKCQRRLTLEIKRARQMALLYYTATHSAEHLKKM</sequence>
<protein>
    <recommendedName>
        <fullName evidence="1">Small ribosomal subunit protein bS18</fullName>
    </recommendedName>
    <alternativeName>
        <fullName evidence="2">30S ribosomal protein S18</fullName>
    </alternativeName>
</protein>
<proteinExistence type="inferred from homology"/>
<organism>
    <name type="scientific">Solidesulfovibrio magneticus (strain ATCC 700980 / DSM 13731 / RS-1)</name>
    <name type="common">Desulfovibrio magneticus</name>
    <dbReference type="NCBI Taxonomy" id="573370"/>
    <lineage>
        <taxon>Bacteria</taxon>
        <taxon>Pseudomonadati</taxon>
        <taxon>Thermodesulfobacteriota</taxon>
        <taxon>Desulfovibrionia</taxon>
        <taxon>Desulfovibrionales</taxon>
        <taxon>Desulfovibrionaceae</taxon>
        <taxon>Solidesulfovibrio</taxon>
    </lineage>
</organism>
<comment type="function">
    <text evidence="1">Binds as a heterodimer with protein bS6 to the central domain of the 16S rRNA, where it helps stabilize the platform of the 30S subunit.</text>
</comment>
<comment type="subunit">
    <text evidence="1">Part of the 30S ribosomal subunit. Forms a tight heterodimer with protein bS6.</text>
</comment>
<comment type="similarity">
    <text evidence="1">Belongs to the bacterial ribosomal protein bS18 family.</text>
</comment>
<gene>
    <name evidence="1" type="primary">rpsR</name>
    <name type="ordered locus">DMR_27030</name>
</gene>
<keyword id="KW-0687">Ribonucleoprotein</keyword>
<keyword id="KW-0689">Ribosomal protein</keyword>
<keyword id="KW-0694">RNA-binding</keyword>
<keyword id="KW-0699">rRNA-binding</keyword>
<name>RS18_SOLM1</name>
<feature type="chain" id="PRO_1000204725" description="Small ribosomal subunit protein bS18">
    <location>
        <begin position="1"/>
        <end position="85"/>
    </location>
</feature>
<reference key="1">
    <citation type="journal article" date="2009" name="Genome Res.">
        <title>Whole genome sequence of Desulfovibrio magneticus strain RS-1 revealed common gene clusters in magnetotactic bacteria.</title>
        <authorList>
            <person name="Nakazawa H."/>
            <person name="Arakaki A."/>
            <person name="Narita-Yamada S."/>
            <person name="Yashiro I."/>
            <person name="Jinno K."/>
            <person name="Aoki N."/>
            <person name="Tsuruyama A."/>
            <person name="Okamura Y."/>
            <person name="Tanikawa S."/>
            <person name="Fujita N."/>
            <person name="Takeyama H."/>
            <person name="Matsunaga T."/>
        </authorList>
    </citation>
    <scope>NUCLEOTIDE SEQUENCE [LARGE SCALE GENOMIC DNA]</scope>
    <source>
        <strain>ATCC 700980 / DSM 13731 / RS-1</strain>
    </source>
</reference>
<dbReference type="EMBL" id="AP010904">
    <property type="protein sequence ID" value="BAH76194.1"/>
    <property type="molecule type" value="Genomic_DNA"/>
</dbReference>
<dbReference type="RefSeq" id="WP_006921086.1">
    <property type="nucleotide sequence ID" value="NC_012796.1"/>
</dbReference>
<dbReference type="SMR" id="C4XGN6"/>
<dbReference type="STRING" id="573370.DMR_27030"/>
<dbReference type="KEGG" id="dma:DMR_27030"/>
<dbReference type="eggNOG" id="COG0238">
    <property type="taxonomic scope" value="Bacteria"/>
</dbReference>
<dbReference type="HOGENOM" id="CLU_148710_2_2_7"/>
<dbReference type="OrthoDB" id="9812008at2"/>
<dbReference type="Proteomes" id="UP000009071">
    <property type="component" value="Chromosome"/>
</dbReference>
<dbReference type="GO" id="GO:0022627">
    <property type="term" value="C:cytosolic small ribosomal subunit"/>
    <property type="evidence" value="ECO:0007669"/>
    <property type="project" value="TreeGrafter"/>
</dbReference>
<dbReference type="GO" id="GO:0070181">
    <property type="term" value="F:small ribosomal subunit rRNA binding"/>
    <property type="evidence" value="ECO:0007669"/>
    <property type="project" value="TreeGrafter"/>
</dbReference>
<dbReference type="GO" id="GO:0003735">
    <property type="term" value="F:structural constituent of ribosome"/>
    <property type="evidence" value="ECO:0007669"/>
    <property type="project" value="InterPro"/>
</dbReference>
<dbReference type="GO" id="GO:0006412">
    <property type="term" value="P:translation"/>
    <property type="evidence" value="ECO:0007669"/>
    <property type="project" value="UniProtKB-UniRule"/>
</dbReference>
<dbReference type="Gene3D" id="4.10.640.10">
    <property type="entry name" value="Ribosomal protein S18"/>
    <property type="match status" value="1"/>
</dbReference>
<dbReference type="HAMAP" id="MF_00270">
    <property type="entry name" value="Ribosomal_bS18"/>
    <property type="match status" value="1"/>
</dbReference>
<dbReference type="InterPro" id="IPR001648">
    <property type="entry name" value="Ribosomal_bS18"/>
</dbReference>
<dbReference type="InterPro" id="IPR018275">
    <property type="entry name" value="Ribosomal_bS18_CS"/>
</dbReference>
<dbReference type="InterPro" id="IPR036870">
    <property type="entry name" value="Ribosomal_bS18_sf"/>
</dbReference>
<dbReference type="NCBIfam" id="TIGR00165">
    <property type="entry name" value="S18"/>
    <property type="match status" value="1"/>
</dbReference>
<dbReference type="PANTHER" id="PTHR13479">
    <property type="entry name" value="30S RIBOSOMAL PROTEIN S18"/>
    <property type="match status" value="1"/>
</dbReference>
<dbReference type="PANTHER" id="PTHR13479:SF40">
    <property type="entry name" value="SMALL RIBOSOMAL SUBUNIT PROTEIN BS18M"/>
    <property type="match status" value="1"/>
</dbReference>
<dbReference type="Pfam" id="PF01084">
    <property type="entry name" value="Ribosomal_S18"/>
    <property type="match status" value="1"/>
</dbReference>
<dbReference type="PRINTS" id="PR00974">
    <property type="entry name" value="RIBOSOMALS18"/>
</dbReference>
<dbReference type="SUPFAM" id="SSF46911">
    <property type="entry name" value="Ribosomal protein S18"/>
    <property type="match status" value="1"/>
</dbReference>
<dbReference type="PROSITE" id="PS00057">
    <property type="entry name" value="RIBOSOMAL_S18"/>
    <property type="match status" value="1"/>
</dbReference>
<accession>C4XGN6</accession>